<name>RNH2_ECO81</name>
<keyword id="KW-0963">Cytoplasm</keyword>
<keyword id="KW-0255">Endonuclease</keyword>
<keyword id="KW-0378">Hydrolase</keyword>
<keyword id="KW-0464">Manganese</keyword>
<keyword id="KW-0479">Metal-binding</keyword>
<keyword id="KW-0540">Nuclease</keyword>
<proteinExistence type="inferred from homology"/>
<gene>
    <name evidence="1" type="primary">rnhB</name>
    <name type="ordered locus">ECED1_0189</name>
</gene>
<evidence type="ECO:0000255" key="1">
    <source>
        <dbReference type="HAMAP-Rule" id="MF_00052"/>
    </source>
</evidence>
<evidence type="ECO:0000255" key="2">
    <source>
        <dbReference type="PROSITE-ProRule" id="PRU01319"/>
    </source>
</evidence>
<sequence length="198" mass="21482">MIEFVYPHTQLVAGVDEVGRGPLVGAVVTAAVILDPARPIAGLNDSKKLSEKRRLALCEEIKEKALSWSLGRAEPHEIDELNILHATMLAMQRAVAGLHIAPEYVLIDGNRCPKLPMPSMAVVKGDSRVPEISAASILAKVTRDAEMAALDIVFPQYGFAQHKGYPTAFHLEKLAEHGATEHHRRSFGPVKRALGLAS</sequence>
<organism>
    <name type="scientific">Escherichia coli O81 (strain ED1a)</name>
    <dbReference type="NCBI Taxonomy" id="585397"/>
    <lineage>
        <taxon>Bacteria</taxon>
        <taxon>Pseudomonadati</taxon>
        <taxon>Pseudomonadota</taxon>
        <taxon>Gammaproteobacteria</taxon>
        <taxon>Enterobacterales</taxon>
        <taxon>Enterobacteriaceae</taxon>
        <taxon>Escherichia</taxon>
    </lineage>
</organism>
<accession>B7MP43</accession>
<reference key="1">
    <citation type="journal article" date="2009" name="PLoS Genet.">
        <title>Organised genome dynamics in the Escherichia coli species results in highly diverse adaptive paths.</title>
        <authorList>
            <person name="Touchon M."/>
            <person name="Hoede C."/>
            <person name="Tenaillon O."/>
            <person name="Barbe V."/>
            <person name="Baeriswyl S."/>
            <person name="Bidet P."/>
            <person name="Bingen E."/>
            <person name="Bonacorsi S."/>
            <person name="Bouchier C."/>
            <person name="Bouvet O."/>
            <person name="Calteau A."/>
            <person name="Chiapello H."/>
            <person name="Clermont O."/>
            <person name="Cruveiller S."/>
            <person name="Danchin A."/>
            <person name="Diard M."/>
            <person name="Dossat C."/>
            <person name="Karoui M.E."/>
            <person name="Frapy E."/>
            <person name="Garry L."/>
            <person name="Ghigo J.M."/>
            <person name="Gilles A.M."/>
            <person name="Johnson J."/>
            <person name="Le Bouguenec C."/>
            <person name="Lescat M."/>
            <person name="Mangenot S."/>
            <person name="Martinez-Jehanne V."/>
            <person name="Matic I."/>
            <person name="Nassif X."/>
            <person name="Oztas S."/>
            <person name="Petit M.A."/>
            <person name="Pichon C."/>
            <person name="Rouy Z."/>
            <person name="Ruf C.S."/>
            <person name="Schneider D."/>
            <person name="Tourret J."/>
            <person name="Vacherie B."/>
            <person name="Vallenet D."/>
            <person name="Medigue C."/>
            <person name="Rocha E.P.C."/>
            <person name="Denamur E."/>
        </authorList>
    </citation>
    <scope>NUCLEOTIDE SEQUENCE [LARGE SCALE GENOMIC DNA]</scope>
    <source>
        <strain>ED1a</strain>
    </source>
</reference>
<feature type="chain" id="PRO_1000194452" description="Ribonuclease HII">
    <location>
        <begin position="1"/>
        <end position="198"/>
    </location>
</feature>
<feature type="domain" description="RNase H type-2" evidence="2">
    <location>
        <begin position="10"/>
        <end position="198"/>
    </location>
</feature>
<feature type="binding site" evidence="1">
    <location>
        <position position="16"/>
    </location>
    <ligand>
        <name>a divalent metal cation</name>
        <dbReference type="ChEBI" id="CHEBI:60240"/>
    </ligand>
</feature>
<feature type="binding site" evidence="1">
    <location>
        <position position="17"/>
    </location>
    <ligand>
        <name>a divalent metal cation</name>
        <dbReference type="ChEBI" id="CHEBI:60240"/>
    </ligand>
</feature>
<feature type="binding site" evidence="1">
    <location>
        <position position="108"/>
    </location>
    <ligand>
        <name>a divalent metal cation</name>
        <dbReference type="ChEBI" id="CHEBI:60240"/>
    </ligand>
</feature>
<comment type="function">
    <text evidence="1">Endonuclease that specifically degrades the RNA of RNA-DNA hybrids.</text>
</comment>
<comment type="catalytic activity">
    <reaction evidence="1">
        <text>Endonucleolytic cleavage to 5'-phosphomonoester.</text>
        <dbReference type="EC" id="3.1.26.4"/>
    </reaction>
</comment>
<comment type="cofactor">
    <cofactor evidence="1">
        <name>Mn(2+)</name>
        <dbReference type="ChEBI" id="CHEBI:29035"/>
    </cofactor>
    <cofactor evidence="1">
        <name>Mg(2+)</name>
        <dbReference type="ChEBI" id="CHEBI:18420"/>
    </cofactor>
    <text evidence="1">Manganese or magnesium. Binds 1 divalent metal ion per monomer in the absence of substrate. May bind a second metal ion after substrate binding.</text>
</comment>
<comment type="subcellular location">
    <subcellularLocation>
        <location evidence="1">Cytoplasm</location>
    </subcellularLocation>
</comment>
<comment type="similarity">
    <text evidence="1">Belongs to the RNase HII family.</text>
</comment>
<protein>
    <recommendedName>
        <fullName evidence="1">Ribonuclease HII</fullName>
        <shortName evidence="1">RNase HII</shortName>
        <ecNumber evidence="1">3.1.26.4</ecNumber>
    </recommendedName>
</protein>
<dbReference type="EC" id="3.1.26.4" evidence="1"/>
<dbReference type="EMBL" id="CU928162">
    <property type="protein sequence ID" value="CAR06408.1"/>
    <property type="molecule type" value="Genomic_DNA"/>
</dbReference>
<dbReference type="RefSeq" id="WP_000569423.1">
    <property type="nucleotide sequence ID" value="NC_011745.1"/>
</dbReference>
<dbReference type="SMR" id="B7MP43"/>
<dbReference type="KEGG" id="ecq:ECED1_0189"/>
<dbReference type="HOGENOM" id="CLU_036532_3_2_6"/>
<dbReference type="Proteomes" id="UP000000748">
    <property type="component" value="Chromosome"/>
</dbReference>
<dbReference type="GO" id="GO:0005737">
    <property type="term" value="C:cytoplasm"/>
    <property type="evidence" value="ECO:0007669"/>
    <property type="project" value="UniProtKB-SubCell"/>
</dbReference>
<dbReference type="GO" id="GO:0032299">
    <property type="term" value="C:ribonuclease H2 complex"/>
    <property type="evidence" value="ECO:0007669"/>
    <property type="project" value="TreeGrafter"/>
</dbReference>
<dbReference type="GO" id="GO:0030145">
    <property type="term" value="F:manganese ion binding"/>
    <property type="evidence" value="ECO:0007669"/>
    <property type="project" value="UniProtKB-UniRule"/>
</dbReference>
<dbReference type="GO" id="GO:0003723">
    <property type="term" value="F:RNA binding"/>
    <property type="evidence" value="ECO:0007669"/>
    <property type="project" value="InterPro"/>
</dbReference>
<dbReference type="GO" id="GO:0004523">
    <property type="term" value="F:RNA-DNA hybrid ribonuclease activity"/>
    <property type="evidence" value="ECO:0007669"/>
    <property type="project" value="UniProtKB-UniRule"/>
</dbReference>
<dbReference type="GO" id="GO:0043137">
    <property type="term" value="P:DNA replication, removal of RNA primer"/>
    <property type="evidence" value="ECO:0007669"/>
    <property type="project" value="TreeGrafter"/>
</dbReference>
<dbReference type="GO" id="GO:0006298">
    <property type="term" value="P:mismatch repair"/>
    <property type="evidence" value="ECO:0007669"/>
    <property type="project" value="TreeGrafter"/>
</dbReference>
<dbReference type="CDD" id="cd07182">
    <property type="entry name" value="RNase_HII_bacteria_HII_like"/>
    <property type="match status" value="1"/>
</dbReference>
<dbReference type="FunFam" id="3.30.420.10:FF:000006">
    <property type="entry name" value="Ribonuclease HII"/>
    <property type="match status" value="1"/>
</dbReference>
<dbReference type="Gene3D" id="3.30.420.10">
    <property type="entry name" value="Ribonuclease H-like superfamily/Ribonuclease H"/>
    <property type="match status" value="1"/>
</dbReference>
<dbReference type="HAMAP" id="MF_00052_B">
    <property type="entry name" value="RNase_HII_B"/>
    <property type="match status" value="1"/>
</dbReference>
<dbReference type="InterPro" id="IPR022898">
    <property type="entry name" value="RNase_HII"/>
</dbReference>
<dbReference type="InterPro" id="IPR001352">
    <property type="entry name" value="RNase_HII/HIII"/>
</dbReference>
<dbReference type="InterPro" id="IPR024567">
    <property type="entry name" value="RNase_HII/HIII_dom"/>
</dbReference>
<dbReference type="InterPro" id="IPR012337">
    <property type="entry name" value="RNaseH-like_sf"/>
</dbReference>
<dbReference type="InterPro" id="IPR036397">
    <property type="entry name" value="RNaseH_sf"/>
</dbReference>
<dbReference type="NCBIfam" id="NF000594">
    <property type="entry name" value="PRK00015.1-1"/>
    <property type="match status" value="1"/>
</dbReference>
<dbReference type="NCBIfam" id="NF000595">
    <property type="entry name" value="PRK00015.1-3"/>
    <property type="match status" value="1"/>
</dbReference>
<dbReference type="NCBIfam" id="NF000596">
    <property type="entry name" value="PRK00015.1-4"/>
    <property type="match status" value="1"/>
</dbReference>
<dbReference type="PANTHER" id="PTHR10954">
    <property type="entry name" value="RIBONUCLEASE H2 SUBUNIT A"/>
    <property type="match status" value="1"/>
</dbReference>
<dbReference type="PANTHER" id="PTHR10954:SF18">
    <property type="entry name" value="RIBONUCLEASE HII"/>
    <property type="match status" value="1"/>
</dbReference>
<dbReference type="Pfam" id="PF01351">
    <property type="entry name" value="RNase_HII"/>
    <property type="match status" value="1"/>
</dbReference>
<dbReference type="SUPFAM" id="SSF53098">
    <property type="entry name" value="Ribonuclease H-like"/>
    <property type="match status" value="1"/>
</dbReference>
<dbReference type="PROSITE" id="PS51975">
    <property type="entry name" value="RNASE_H_2"/>
    <property type="match status" value="1"/>
</dbReference>